<dbReference type="GO" id="GO:0005737">
    <property type="term" value="C:cytoplasm"/>
    <property type="evidence" value="ECO:0007669"/>
    <property type="project" value="UniProtKB-SubCell"/>
</dbReference>
<dbReference type="GO" id="GO:0005634">
    <property type="term" value="C:nucleus"/>
    <property type="evidence" value="ECO:0007669"/>
    <property type="project" value="UniProtKB-SubCell"/>
</dbReference>
<dbReference type="GO" id="GO:1990904">
    <property type="term" value="C:ribonucleoprotein complex"/>
    <property type="evidence" value="ECO:0007669"/>
    <property type="project" value="UniProtKB-KW"/>
</dbReference>
<dbReference type="GO" id="GO:0003723">
    <property type="term" value="F:RNA binding"/>
    <property type="evidence" value="ECO:0007669"/>
    <property type="project" value="UniProtKB-KW"/>
</dbReference>
<dbReference type="InterPro" id="IPR035979">
    <property type="entry name" value="RBD_domain_sf"/>
</dbReference>
<dbReference type="SUPFAM" id="SSF54928">
    <property type="entry name" value="RNA-binding domain, RBD"/>
    <property type="match status" value="1"/>
</dbReference>
<keyword id="KW-0963">Cytoplasm</keyword>
<keyword id="KW-0903">Direct protein sequencing</keyword>
<keyword id="KW-0488">Methylation</keyword>
<keyword id="KW-0539">Nucleus</keyword>
<keyword id="KW-0687">Ribonucleoprotein</keyword>
<keyword id="KW-0694">RNA-binding</keyword>
<name>RO40_ARTSA</name>
<reference key="1">
    <citation type="journal article" date="1994" name="J. Biol. Chem.">
        <title>Tyrosine phosphorylation of a M(r) 38,000 A/B-type hnRNP protein selectively modulates its RNA binding.</title>
        <authorList>
            <person name="Pype S."/>
            <person name="Slegers H."/>
            <person name="Moens L."/>
            <person name="Merlevede W."/>
            <person name="Goris J."/>
        </authorList>
    </citation>
    <scope>PROTEIN SEQUENCE</scope>
    <scope>SUBCELLULAR LOCATION</scope>
</reference>
<organism>
    <name type="scientific">Artemia salina</name>
    <name type="common">Brine shrimp</name>
    <dbReference type="NCBI Taxonomy" id="85549"/>
    <lineage>
        <taxon>Eukaryota</taxon>
        <taxon>Metazoa</taxon>
        <taxon>Ecdysozoa</taxon>
        <taxon>Arthropoda</taxon>
        <taxon>Crustacea</taxon>
        <taxon>Branchiopoda</taxon>
        <taxon>Anostraca</taxon>
        <taxon>Artemiidae</taxon>
        <taxon>Artemia</taxon>
    </lineage>
</organism>
<accession>Q09135</accession>
<proteinExistence type="evidence at protein level"/>
<feature type="chain" id="PRO_0000081841" description="Heterogeneous nuclear ribonucleoprotein-like protein HD40">
    <location>
        <begin position="1" status="less than"/>
        <end position="109" status="greater than"/>
    </location>
</feature>
<feature type="domain" description="RRM" evidence="2">
    <location>
        <begin position="40"/>
        <end position="50" status="greater than"/>
    </location>
</feature>
<feature type="region of interest" description="Disordered" evidence="3">
    <location>
        <begin position="1"/>
        <end position="36"/>
    </location>
</feature>
<feature type="compositionally biased region" description="Basic and acidic residues" evidence="3">
    <location>
        <begin position="23"/>
        <end position="36"/>
    </location>
</feature>
<feature type="modified residue" description="Asymmetric dimethylarginine" evidence="1">
    <location>
        <position position="102"/>
    </location>
</feature>
<feature type="modified residue" description="Asymmetric dimethylarginine" evidence="1">
    <location>
        <position position="105"/>
    </location>
</feature>
<feature type="non-consecutive residues" evidence="5">
    <location>
        <begin position="23"/>
        <end position="24"/>
    </location>
</feature>
<feature type="non-consecutive residues" evidence="5">
    <location>
        <begin position="50"/>
        <end position="51"/>
    </location>
</feature>
<feature type="non-consecutive residues" evidence="5">
    <location>
        <begin position="72"/>
        <end position="73"/>
    </location>
</feature>
<feature type="non-consecutive residues" evidence="5">
    <location>
        <begin position="81"/>
        <end position="82"/>
    </location>
</feature>
<feature type="non-consecutive residues" evidence="5">
    <location>
        <begin position="100"/>
        <end position="101"/>
    </location>
</feature>
<feature type="non-terminal residue">
    <location>
        <position position="1"/>
    </location>
</feature>
<feature type="non-terminal residue">
    <location>
        <position position="109"/>
    </location>
</feature>
<protein>
    <recommendedName>
        <fullName>Heterogeneous nuclear ribonucleoprotein-like protein HD40</fullName>
    </recommendedName>
</protein>
<evidence type="ECO:0000250" key="1"/>
<evidence type="ECO:0000255" key="2">
    <source>
        <dbReference type="PROSITE-ProRule" id="PRU00176"/>
    </source>
</evidence>
<evidence type="ECO:0000256" key="3">
    <source>
        <dbReference type="SAM" id="MobiDB-lite"/>
    </source>
</evidence>
<evidence type="ECO:0000269" key="4">
    <source>
    </source>
</evidence>
<evidence type="ECO:0000305" key="5"/>
<comment type="subcellular location">
    <subcellularLocation>
        <location evidence="4">Cytoplasm</location>
    </subcellularLocation>
    <subcellularLocation>
        <location evidence="4">Nucleus</location>
    </subcellularLocation>
    <text>Accumulates in the nucleus during cyst development, presumably concomitant with the resumption of transcriptional activity.</text>
</comment>
<sequence>EEVSNGQEHTEGMXQGEXNXIXVEEHHEGEKNSHLVGKDEEKKLFVGALSEHFSKYGEIEGINIKVDPVTGRAGEHVINSKAYFGQFGNIVEVELFDKTKARGTRGGQR</sequence>